<feature type="chain" id="PRO_1000075370" description="S-adenosylmethionine synthase">
    <location>
        <begin position="1"/>
        <end position="393"/>
    </location>
</feature>
<feature type="region of interest" description="Flexible loop" evidence="1">
    <location>
        <begin position="100"/>
        <end position="110"/>
    </location>
</feature>
<feature type="binding site" description="in other chain" evidence="1">
    <location>
        <position position="16"/>
    </location>
    <ligand>
        <name>ATP</name>
        <dbReference type="ChEBI" id="CHEBI:30616"/>
        <note>ligand shared between two neighboring subunits</note>
    </ligand>
</feature>
<feature type="binding site" evidence="1">
    <location>
        <position position="18"/>
    </location>
    <ligand>
        <name>Mg(2+)</name>
        <dbReference type="ChEBI" id="CHEBI:18420"/>
    </ligand>
</feature>
<feature type="binding site" evidence="1">
    <location>
        <position position="44"/>
    </location>
    <ligand>
        <name>K(+)</name>
        <dbReference type="ChEBI" id="CHEBI:29103"/>
    </ligand>
</feature>
<feature type="binding site" description="in other chain" evidence="1">
    <location>
        <position position="57"/>
    </location>
    <ligand>
        <name>L-methionine</name>
        <dbReference type="ChEBI" id="CHEBI:57844"/>
        <note>ligand shared between two neighboring subunits</note>
    </ligand>
</feature>
<feature type="binding site" description="in other chain" evidence="1">
    <location>
        <position position="100"/>
    </location>
    <ligand>
        <name>L-methionine</name>
        <dbReference type="ChEBI" id="CHEBI:57844"/>
        <note>ligand shared between two neighboring subunits</note>
    </ligand>
</feature>
<feature type="binding site" description="in other chain" evidence="1">
    <location>
        <begin position="165"/>
        <end position="167"/>
    </location>
    <ligand>
        <name>ATP</name>
        <dbReference type="ChEBI" id="CHEBI:30616"/>
        <note>ligand shared between two neighboring subunits</note>
    </ligand>
</feature>
<feature type="binding site" description="in other chain" evidence="1">
    <location>
        <begin position="231"/>
        <end position="232"/>
    </location>
    <ligand>
        <name>ATP</name>
        <dbReference type="ChEBI" id="CHEBI:30616"/>
        <note>ligand shared between two neighboring subunits</note>
    </ligand>
</feature>
<feature type="binding site" evidence="1">
    <location>
        <position position="240"/>
    </location>
    <ligand>
        <name>ATP</name>
        <dbReference type="ChEBI" id="CHEBI:30616"/>
        <note>ligand shared between two neighboring subunits</note>
    </ligand>
</feature>
<feature type="binding site" evidence="1">
    <location>
        <position position="240"/>
    </location>
    <ligand>
        <name>L-methionine</name>
        <dbReference type="ChEBI" id="CHEBI:57844"/>
        <note>ligand shared between two neighboring subunits</note>
    </ligand>
</feature>
<feature type="binding site" description="in other chain" evidence="1">
    <location>
        <begin position="246"/>
        <end position="247"/>
    </location>
    <ligand>
        <name>ATP</name>
        <dbReference type="ChEBI" id="CHEBI:30616"/>
        <note>ligand shared between two neighboring subunits</note>
    </ligand>
</feature>
<feature type="binding site" evidence="1">
    <location>
        <position position="267"/>
    </location>
    <ligand>
        <name>ATP</name>
        <dbReference type="ChEBI" id="CHEBI:30616"/>
        <note>ligand shared between two neighboring subunits</note>
    </ligand>
</feature>
<feature type="binding site" description="in other chain" evidence="1">
    <location>
        <position position="271"/>
    </location>
    <ligand>
        <name>L-methionine</name>
        <dbReference type="ChEBI" id="CHEBI:57844"/>
        <note>ligand shared between two neighboring subunits</note>
    </ligand>
</feature>
<organism>
    <name type="scientific">Coxiella burnetii (strain Dugway 5J108-111)</name>
    <dbReference type="NCBI Taxonomy" id="434922"/>
    <lineage>
        <taxon>Bacteria</taxon>
        <taxon>Pseudomonadati</taxon>
        <taxon>Pseudomonadota</taxon>
        <taxon>Gammaproteobacteria</taxon>
        <taxon>Legionellales</taxon>
        <taxon>Coxiellaceae</taxon>
        <taxon>Coxiella</taxon>
    </lineage>
</organism>
<dbReference type="EC" id="2.5.1.6" evidence="1"/>
<dbReference type="EMBL" id="CP000733">
    <property type="protein sequence ID" value="ABS76560.1"/>
    <property type="molecule type" value="Genomic_DNA"/>
</dbReference>
<dbReference type="RefSeq" id="WP_011997436.1">
    <property type="nucleotide sequence ID" value="NC_009727.1"/>
</dbReference>
<dbReference type="SMR" id="A9KD87"/>
<dbReference type="KEGG" id="cbd:CBUD_2131"/>
<dbReference type="HOGENOM" id="CLU_041802_1_1_6"/>
<dbReference type="UniPathway" id="UPA00315">
    <property type="reaction ID" value="UER00080"/>
</dbReference>
<dbReference type="Proteomes" id="UP000008555">
    <property type="component" value="Chromosome"/>
</dbReference>
<dbReference type="GO" id="GO:0005737">
    <property type="term" value="C:cytoplasm"/>
    <property type="evidence" value="ECO:0007669"/>
    <property type="project" value="UniProtKB-SubCell"/>
</dbReference>
<dbReference type="GO" id="GO:0005524">
    <property type="term" value="F:ATP binding"/>
    <property type="evidence" value="ECO:0007669"/>
    <property type="project" value="UniProtKB-UniRule"/>
</dbReference>
<dbReference type="GO" id="GO:0000287">
    <property type="term" value="F:magnesium ion binding"/>
    <property type="evidence" value="ECO:0007669"/>
    <property type="project" value="UniProtKB-UniRule"/>
</dbReference>
<dbReference type="GO" id="GO:0004478">
    <property type="term" value="F:methionine adenosyltransferase activity"/>
    <property type="evidence" value="ECO:0007669"/>
    <property type="project" value="UniProtKB-UniRule"/>
</dbReference>
<dbReference type="GO" id="GO:0006730">
    <property type="term" value="P:one-carbon metabolic process"/>
    <property type="evidence" value="ECO:0007669"/>
    <property type="project" value="UniProtKB-KW"/>
</dbReference>
<dbReference type="GO" id="GO:0006556">
    <property type="term" value="P:S-adenosylmethionine biosynthetic process"/>
    <property type="evidence" value="ECO:0007669"/>
    <property type="project" value="UniProtKB-UniRule"/>
</dbReference>
<dbReference type="CDD" id="cd18079">
    <property type="entry name" value="S-AdoMet_synt"/>
    <property type="match status" value="1"/>
</dbReference>
<dbReference type="FunFam" id="3.30.300.10:FF:000003">
    <property type="entry name" value="S-adenosylmethionine synthase"/>
    <property type="match status" value="1"/>
</dbReference>
<dbReference type="FunFam" id="3.30.300.10:FF:000004">
    <property type="entry name" value="S-adenosylmethionine synthase"/>
    <property type="match status" value="1"/>
</dbReference>
<dbReference type="Gene3D" id="3.30.300.10">
    <property type="match status" value="3"/>
</dbReference>
<dbReference type="HAMAP" id="MF_00086">
    <property type="entry name" value="S_AdoMet_synth1"/>
    <property type="match status" value="1"/>
</dbReference>
<dbReference type="InterPro" id="IPR022631">
    <property type="entry name" value="ADOMET_SYNTHASE_CS"/>
</dbReference>
<dbReference type="InterPro" id="IPR022630">
    <property type="entry name" value="S-AdoMet_synt_C"/>
</dbReference>
<dbReference type="InterPro" id="IPR022629">
    <property type="entry name" value="S-AdoMet_synt_central"/>
</dbReference>
<dbReference type="InterPro" id="IPR022628">
    <property type="entry name" value="S-AdoMet_synt_N"/>
</dbReference>
<dbReference type="InterPro" id="IPR002133">
    <property type="entry name" value="S-AdoMet_synthetase"/>
</dbReference>
<dbReference type="InterPro" id="IPR022636">
    <property type="entry name" value="S-AdoMet_synthetase_sfam"/>
</dbReference>
<dbReference type="NCBIfam" id="TIGR01034">
    <property type="entry name" value="metK"/>
    <property type="match status" value="1"/>
</dbReference>
<dbReference type="PANTHER" id="PTHR11964">
    <property type="entry name" value="S-ADENOSYLMETHIONINE SYNTHETASE"/>
    <property type="match status" value="1"/>
</dbReference>
<dbReference type="Pfam" id="PF02773">
    <property type="entry name" value="S-AdoMet_synt_C"/>
    <property type="match status" value="1"/>
</dbReference>
<dbReference type="Pfam" id="PF02772">
    <property type="entry name" value="S-AdoMet_synt_M"/>
    <property type="match status" value="1"/>
</dbReference>
<dbReference type="Pfam" id="PF00438">
    <property type="entry name" value="S-AdoMet_synt_N"/>
    <property type="match status" value="1"/>
</dbReference>
<dbReference type="PIRSF" id="PIRSF000497">
    <property type="entry name" value="MAT"/>
    <property type="match status" value="1"/>
</dbReference>
<dbReference type="SUPFAM" id="SSF55973">
    <property type="entry name" value="S-adenosylmethionine synthetase"/>
    <property type="match status" value="3"/>
</dbReference>
<dbReference type="PROSITE" id="PS00376">
    <property type="entry name" value="ADOMET_SYNTHASE_1"/>
    <property type="match status" value="1"/>
</dbReference>
<dbReference type="PROSITE" id="PS00377">
    <property type="entry name" value="ADOMET_SYNTHASE_2"/>
    <property type="match status" value="1"/>
</dbReference>
<keyword id="KW-0067">ATP-binding</keyword>
<keyword id="KW-0963">Cytoplasm</keyword>
<keyword id="KW-0460">Magnesium</keyword>
<keyword id="KW-0479">Metal-binding</keyword>
<keyword id="KW-0547">Nucleotide-binding</keyword>
<keyword id="KW-0554">One-carbon metabolism</keyword>
<keyword id="KW-0630">Potassium</keyword>
<keyword id="KW-0808">Transferase</keyword>
<sequence length="393" mass="42796">MTHTTLFTSESVSEGHPDKVADQISDAVLDALISQDPNCRVACEAVVKSGMVFVAGEITTNAWADVEQITRNTVLQIGYNDPHLGFDGETCAVVTAIGKQSPDIVMGVDGREDQELGAGDQGLMFGYASRETDVFMPAPITYAHRLVRQQALLRKNGRLPWLRPDAKSQVTLRYENGKPVAADCIVLSTQHSPEISQESLREAVIDEIIKPIMPPHWLDKHTRFLVNPTGRFVIGGPVGDCGLTGRKIIVDTYGGMARHGGGCFSGKDPSKVDRSGAYAARYVAKNIVAGGLADRCEIQVSYAIGVAEPTSISVETFGTGKIDEVRTQQLIKEHFDLRPGKIIEELNLLRSIYKATATYGHFGREEPEFTWERTDKAEILREAAGLAAANVTN</sequence>
<accession>A9KD87</accession>
<protein>
    <recommendedName>
        <fullName evidence="1">S-adenosylmethionine synthase</fullName>
        <shortName evidence="1">AdoMet synthase</shortName>
        <ecNumber evidence="1">2.5.1.6</ecNumber>
    </recommendedName>
    <alternativeName>
        <fullName evidence="1">MAT</fullName>
    </alternativeName>
    <alternativeName>
        <fullName evidence="1">Methionine adenosyltransferase</fullName>
    </alternativeName>
</protein>
<evidence type="ECO:0000255" key="1">
    <source>
        <dbReference type="HAMAP-Rule" id="MF_00086"/>
    </source>
</evidence>
<gene>
    <name evidence="1" type="primary">metK</name>
    <name type="ordered locus">CBUD_2131</name>
</gene>
<reference key="1">
    <citation type="journal article" date="2009" name="Infect. Immun.">
        <title>Comparative genomics reveal extensive transposon-mediated genomic plasticity and diversity among potential effector proteins within the genus Coxiella.</title>
        <authorList>
            <person name="Beare P.A."/>
            <person name="Unsworth N."/>
            <person name="Andoh M."/>
            <person name="Voth D.E."/>
            <person name="Omsland A."/>
            <person name="Gilk S.D."/>
            <person name="Williams K.P."/>
            <person name="Sobral B.W."/>
            <person name="Kupko J.J. III"/>
            <person name="Porcella S.F."/>
            <person name="Samuel J.E."/>
            <person name="Heinzen R.A."/>
        </authorList>
    </citation>
    <scope>NUCLEOTIDE SEQUENCE [LARGE SCALE GENOMIC DNA]</scope>
    <source>
        <strain>Dugway 5J108-111</strain>
    </source>
</reference>
<proteinExistence type="inferred from homology"/>
<comment type="function">
    <text evidence="1">Catalyzes the formation of S-adenosylmethionine (AdoMet) from methionine and ATP. The overall synthetic reaction is composed of two sequential steps, AdoMet formation and the subsequent tripolyphosphate hydrolysis which occurs prior to release of AdoMet from the enzyme.</text>
</comment>
<comment type="catalytic activity">
    <reaction evidence="1">
        <text>L-methionine + ATP + H2O = S-adenosyl-L-methionine + phosphate + diphosphate</text>
        <dbReference type="Rhea" id="RHEA:21080"/>
        <dbReference type="ChEBI" id="CHEBI:15377"/>
        <dbReference type="ChEBI" id="CHEBI:30616"/>
        <dbReference type="ChEBI" id="CHEBI:33019"/>
        <dbReference type="ChEBI" id="CHEBI:43474"/>
        <dbReference type="ChEBI" id="CHEBI:57844"/>
        <dbReference type="ChEBI" id="CHEBI:59789"/>
        <dbReference type="EC" id="2.5.1.6"/>
    </reaction>
</comment>
<comment type="cofactor">
    <cofactor evidence="1">
        <name>Mg(2+)</name>
        <dbReference type="ChEBI" id="CHEBI:18420"/>
    </cofactor>
    <text evidence="1">Binds 2 divalent ions per subunit.</text>
</comment>
<comment type="cofactor">
    <cofactor evidence="1">
        <name>K(+)</name>
        <dbReference type="ChEBI" id="CHEBI:29103"/>
    </cofactor>
    <text evidence="1">Binds 1 potassium ion per subunit.</text>
</comment>
<comment type="pathway">
    <text evidence="1">Amino-acid biosynthesis; S-adenosyl-L-methionine biosynthesis; S-adenosyl-L-methionine from L-methionine: step 1/1.</text>
</comment>
<comment type="subunit">
    <text evidence="1">Homotetramer; dimer of dimers.</text>
</comment>
<comment type="subcellular location">
    <subcellularLocation>
        <location evidence="1">Cytoplasm</location>
    </subcellularLocation>
</comment>
<comment type="similarity">
    <text evidence="1">Belongs to the AdoMet synthase family.</text>
</comment>
<name>METK_COXBN</name>